<keyword id="KW-0614">Plasmid</keyword>
<keyword id="KW-1185">Reference proteome</keyword>
<accession>P55618</accession>
<organism>
    <name type="scientific">Sinorhizobium fredii (strain NBRC 101917 / NGR234)</name>
    <dbReference type="NCBI Taxonomy" id="394"/>
    <lineage>
        <taxon>Bacteria</taxon>
        <taxon>Pseudomonadati</taxon>
        <taxon>Pseudomonadota</taxon>
        <taxon>Alphaproteobacteria</taxon>
        <taxon>Hyphomicrobiales</taxon>
        <taxon>Rhizobiaceae</taxon>
        <taxon>Sinorhizobium/Ensifer group</taxon>
        <taxon>Sinorhizobium</taxon>
    </lineage>
</organism>
<proteinExistence type="predicted"/>
<feature type="chain" id="PRO_0000200936" description="Uncharacterized protein y4pM">
    <location>
        <begin position="1"/>
        <end position="272"/>
    </location>
</feature>
<name>Y4PM_SINFN</name>
<sequence length="272" mass="30856">MDDFGTRTACKATETLPMWSHVFSFGLGGIIVPSEAVHEISSATNDLCARWDVPVLHGNKIRGARGSFGFLKKDENKKARFFQELEEILIDDRITAHACVICRPGYRDRYHDKRPEGVRWEMSRTAFDISVERAAKYARSLKRKLSVVYERTGETEDRLIEGYFQRLRTTGTEFSVENSAQHSPMSSADLADTLMSIWPDGKGNPMLQLADLVVHPLGHRPTGLRNRAYDRFAESGQLLDSRTDDPTISIKYSCYDDPYKEYVAPEGNPRNT</sequence>
<gene>
    <name type="ordered locus">NGR_a01990</name>
    <name type="ORF">y4pM</name>
</gene>
<dbReference type="EMBL" id="U00090">
    <property type="protein sequence ID" value="AAB91823.1"/>
    <property type="molecule type" value="Genomic_DNA"/>
</dbReference>
<dbReference type="RefSeq" id="NP_444026.1">
    <property type="nucleotide sequence ID" value="NC_000914.2"/>
</dbReference>
<dbReference type="RefSeq" id="WP_010875233.1">
    <property type="nucleotide sequence ID" value="NC_000914.2"/>
</dbReference>
<dbReference type="KEGG" id="rhi:NGR_a01990"/>
<dbReference type="eggNOG" id="ENOG5032R22">
    <property type="taxonomic scope" value="Bacteria"/>
</dbReference>
<dbReference type="HOGENOM" id="CLU_1033508_0_0_5"/>
<dbReference type="OrthoDB" id="507950at2"/>
<dbReference type="Proteomes" id="UP000001054">
    <property type="component" value="Plasmid pNGR234a"/>
</dbReference>
<geneLocation type="plasmid">
    <name>sym pNGR234a</name>
</geneLocation>
<protein>
    <recommendedName>
        <fullName>Uncharacterized protein y4pM</fullName>
    </recommendedName>
</protein>
<reference key="1">
    <citation type="journal article" date="1997" name="Nature">
        <title>Molecular basis of symbiosis between Rhizobium and legumes.</title>
        <authorList>
            <person name="Freiberg C.A."/>
            <person name="Fellay R."/>
            <person name="Bairoch A."/>
            <person name="Broughton W.J."/>
            <person name="Rosenthal A."/>
            <person name="Perret X."/>
        </authorList>
    </citation>
    <scope>NUCLEOTIDE SEQUENCE [LARGE SCALE GENOMIC DNA]</scope>
    <source>
        <strain>NBRC 101917 / NGR234</strain>
    </source>
</reference>
<reference key="2">
    <citation type="journal article" date="2009" name="Appl. Environ. Microbiol.">
        <title>Rhizobium sp. strain NGR234 possesses a remarkable number of secretion systems.</title>
        <authorList>
            <person name="Schmeisser C."/>
            <person name="Liesegang H."/>
            <person name="Krysciak D."/>
            <person name="Bakkou N."/>
            <person name="Le Quere A."/>
            <person name="Wollherr A."/>
            <person name="Heinemeyer I."/>
            <person name="Morgenstern B."/>
            <person name="Pommerening-Roeser A."/>
            <person name="Flores M."/>
            <person name="Palacios R."/>
            <person name="Brenner S."/>
            <person name="Gottschalk G."/>
            <person name="Schmitz R.A."/>
            <person name="Broughton W.J."/>
            <person name="Perret X."/>
            <person name="Strittmatter A.W."/>
            <person name="Streit W.R."/>
        </authorList>
    </citation>
    <scope>NUCLEOTIDE SEQUENCE [LARGE SCALE GENOMIC DNA]</scope>
    <source>
        <strain>NBRC 101917 / NGR234</strain>
    </source>
</reference>